<evidence type="ECO:0000255" key="1">
    <source>
        <dbReference type="HAMAP-Rule" id="MF_01431"/>
    </source>
</evidence>
<sequence>MALPVLFDCDPGHDDAIAIVLALASPELDVKAITSSAGNQTPDKTLRNVLRMLTLLGRNDIPVAGGAIKPLMRDLIIADNVHGESGLDGPALPEPSFAPQTCTAVELMAKTLRESPEPVTIVATGPQTNVALLLNSHPELHRKIARIVIMGGAMGLGNWTPAAEFNIYVDPEAAEIVFQSGIPVVMAGLDVTHKAQIHAEDTERFRATGNPVSTIVAELLDFFLEYHKDEKWGFTGAPLHDPCTIAWLLKPELFTTVERWVGVETQGKYTQGMTVVDYYFLTGNKPNATVMVDIDRQGFVDLLAERLAFYAS</sequence>
<reference key="1">
    <citation type="submission" date="2007-08" db="EMBL/GenBank/DDBJ databases">
        <authorList>
            <consortium name="The Citrobacter koseri Genome Sequencing Project"/>
            <person name="McClelland M."/>
            <person name="Sanderson E.K."/>
            <person name="Porwollik S."/>
            <person name="Spieth J."/>
            <person name="Clifton W.S."/>
            <person name="Latreille P."/>
            <person name="Courtney L."/>
            <person name="Wang C."/>
            <person name="Pepin K."/>
            <person name="Bhonagiri V."/>
            <person name="Nash W."/>
            <person name="Johnson M."/>
            <person name="Thiruvilangam P."/>
            <person name="Wilson R."/>
        </authorList>
    </citation>
    <scope>NUCLEOTIDE SEQUENCE [LARGE SCALE GENOMIC DNA]</scope>
    <source>
        <strain>ATCC BAA-895 / CDC 4225-83 / SGSC4696</strain>
    </source>
</reference>
<gene>
    <name evidence="1" type="primary">rihA</name>
    <name type="ordered locus">CKO_02512</name>
</gene>
<name>RIHA_CITK8</name>
<keyword id="KW-0326">Glycosidase</keyword>
<keyword id="KW-0378">Hydrolase</keyword>
<keyword id="KW-1185">Reference proteome</keyword>
<accession>A8AJF8</accession>
<feature type="chain" id="PRO_1000024393" description="Pyrimidine-specific ribonucleoside hydrolase RihA">
    <location>
        <begin position="1"/>
        <end position="312"/>
    </location>
</feature>
<feature type="active site" evidence="1">
    <location>
        <position position="240"/>
    </location>
</feature>
<comment type="function">
    <text evidence="1">Hydrolyzes cytidine or uridine to ribose and cytosine or uracil, respectively.</text>
</comment>
<comment type="similarity">
    <text evidence="1">Belongs to the IUNH family. RihA subfamily.</text>
</comment>
<dbReference type="EC" id="3.2.-.-" evidence="1"/>
<dbReference type="EMBL" id="CP000822">
    <property type="protein sequence ID" value="ABV13621.1"/>
    <property type="molecule type" value="Genomic_DNA"/>
</dbReference>
<dbReference type="RefSeq" id="WP_012133342.1">
    <property type="nucleotide sequence ID" value="NC_009792.1"/>
</dbReference>
<dbReference type="SMR" id="A8AJF8"/>
<dbReference type="STRING" id="290338.CKO_02512"/>
<dbReference type="GeneID" id="45136389"/>
<dbReference type="KEGG" id="cko:CKO_02512"/>
<dbReference type="HOGENOM" id="CLU_036838_2_0_6"/>
<dbReference type="OrthoDB" id="9797882at2"/>
<dbReference type="Proteomes" id="UP000008148">
    <property type="component" value="Chromosome"/>
</dbReference>
<dbReference type="GO" id="GO:0005829">
    <property type="term" value="C:cytosol"/>
    <property type="evidence" value="ECO:0007669"/>
    <property type="project" value="TreeGrafter"/>
</dbReference>
<dbReference type="GO" id="GO:0008477">
    <property type="term" value="F:purine nucleosidase activity"/>
    <property type="evidence" value="ECO:0007669"/>
    <property type="project" value="TreeGrafter"/>
</dbReference>
<dbReference type="GO" id="GO:0045437">
    <property type="term" value="F:uridine nucleosidase activity"/>
    <property type="evidence" value="ECO:0007669"/>
    <property type="project" value="InterPro"/>
</dbReference>
<dbReference type="GO" id="GO:0015949">
    <property type="term" value="P:nucleobase-containing small molecule interconversion"/>
    <property type="evidence" value="ECO:0007669"/>
    <property type="project" value="InterPro"/>
</dbReference>
<dbReference type="GO" id="GO:0006152">
    <property type="term" value="P:purine nucleoside catabolic process"/>
    <property type="evidence" value="ECO:0007669"/>
    <property type="project" value="TreeGrafter"/>
</dbReference>
<dbReference type="GO" id="GO:0006206">
    <property type="term" value="P:pyrimidine nucleobase metabolic process"/>
    <property type="evidence" value="ECO:0007669"/>
    <property type="project" value="UniProtKB-UniRule"/>
</dbReference>
<dbReference type="CDD" id="cd02651">
    <property type="entry name" value="nuc_hydro_IU_UC_XIUA"/>
    <property type="match status" value="1"/>
</dbReference>
<dbReference type="FunFam" id="3.90.245.10:FF:000001">
    <property type="entry name" value="Pyrimidine-specific ribonucleoside hydrolase RihA"/>
    <property type="match status" value="1"/>
</dbReference>
<dbReference type="Gene3D" id="3.90.245.10">
    <property type="entry name" value="Ribonucleoside hydrolase-like"/>
    <property type="match status" value="1"/>
</dbReference>
<dbReference type="HAMAP" id="MF_01431">
    <property type="entry name" value="Pyrim_hydro_RihA"/>
    <property type="match status" value="1"/>
</dbReference>
<dbReference type="InterPro" id="IPR015910">
    <property type="entry name" value="I/U_nuclsd_hydro_CS"/>
</dbReference>
<dbReference type="InterPro" id="IPR001910">
    <property type="entry name" value="Inosine/uridine_hydrolase_dom"/>
</dbReference>
<dbReference type="InterPro" id="IPR023186">
    <property type="entry name" value="IUNH"/>
</dbReference>
<dbReference type="InterPro" id="IPR022975">
    <property type="entry name" value="Pyrim_hydro_RihA"/>
</dbReference>
<dbReference type="InterPro" id="IPR036452">
    <property type="entry name" value="Ribo_hydro-like"/>
</dbReference>
<dbReference type="NCBIfam" id="NF007761">
    <property type="entry name" value="PRK10443.1"/>
    <property type="match status" value="1"/>
</dbReference>
<dbReference type="PANTHER" id="PTHR12304">
    <property type="entry name" value="INOSINE-URIDINE PREFERRING NUCLEOSIDE HYDROLASE"/>
    <property type="match status" value="1"/>
</dbReference>
<dbReference type="PANTHER" id="PTHR12304:SF4">
    <property type="entry name" value="URIDINE NUCLEOSIDASE"/>
    <property type="match status" value="1"/>
</dbReference>
<dbReference type="Pfam" id="PF01156">
    <property type="entry name" value="IU_nuc_hydro"/>
    <property type="match status" value="1"/>
</dbReference>
<dbReference type="SUPFAM" id="SSF53590">
    <property type="entry name" value="Nucleoside hydrolase"/>
    <property type="match status" value="1"/>
</dbReference>
<dbReference type="PROSITE" id="PS01247">
    <property type="entry name" value="IUNH"/>
    <property type="match status" value="1"/>
</dbReference>
<protein>
    <recommendedName>
        <fullName evidence="1">Pyrimidine-specific ribonucleoside hydrolase RihA</fullName>
        <ecNumber evidence="1">3.2.-.-</ecNumber>
    </recommendedName>
    <alternativeName>
        <fullName evidence="1">Cytidine/uridine-specific hydrolase</fullName>
    </alternativeName>
</protein>
<proteinExistence type="inferred from homology"/>
<organism>
    <name type="scientific">Citrobacter koseri (strain ATCC BAA-895 / CDC 4225-83 / SGSC4696)</name>
    <dbReference type="NCBI Taxonomy" id="290338"/>
    <lineage>
        <taxon>Bacteria</taxon>
        <taxon>Pseudomonadati</taxon>
        <taxon>Pseudomonadota</taxon>
        <taxon>Gammaproteobacteria</taxon>
        <taxon>Enterobacterales</taxon>
        <taxon>Enterobacteriaceae</taxon>
        <taxon>Citrobacter</taxon>
    </lineage>
</organism>